<keyword id="KW-0227">DNA damage</keyword>
<keyword id="KW-0233">DNA recombination</keyword>
<keyword id="KW-0234">DNA repair</keyword>
<keyword id="KW-0479">Metal-binding</keyword>
<keyword id="KW-0862">Zinc</keyword>
<keyword id="KW-0863">Zinc-finger</keyword>
<comment type="function">
    <text evidence="1">May play a role in DNA repair. It seems to be involved in an RecBC-independent recombinational process of DNA repair. It may act with RecF and RecO.</text>
</comment>
<comment type="similarity">
    <text evidence="1">Belongs to the RecR family.</text>
</comment>
<organism>
    <name type="scientific">Staphylococcus haemolyticus (strain JCSC1435)</name>
    <dbReference type="NCBI Taxonomy" id="279808"/>
    <lineage>
        <taxon>Bacteria</taxon>
        <taxon>Bacillati</taxon>
        <taxon>Bacillota</taxon>
        <taxon>Bacilli</taxon>
        <taxon>Bacillales</taxon>
        <taxon>Staphylococcaceae</taxon>
        <taxon>Staphylococcus</taxon>
    </lineage>
</organism>
<sequence>MHYPEPISKLIDSFMKLPGIGPKTAQRLAFHTLDMKEDDVVQFAKALVDVKRELTYCSVCGHITENDPCYICEDKQRDRSVICVVEDDKDVIAMEKMREYKGLYHVLHGSISPMDGIGPEDINIPTLIDRLKDEEVKELILAMNPNLEGESTAMYISRLVKPIGIKVTRLAQGLSVGGDLEYADEVTLSKAIAGRTEM</sequence>
<reference key="1">
    <citation type="journal article" date="2005" name="J. Bacteriol.">
        <title>Whole-genome sequencing of Staphylococcus haemolyticus uncovers the extreme plasticity of its genome and the evolution of human-colonizing staphylococcal species.</title>
        <authorList>
            <person name="Takeuchi F."/>
            <person name="Watanabe S."/>
            <person name="Baba T."/>
            <person name="Yuzawa H."/>
            <person name="Ito T."/>
            <person name="Morimoto Y."/>
            <person name="Kuroda M."/>
            <person name="Cui L."/>
            <person name="Takahashi M."/>
            <person name="Ankai A."/>
            <person name="Baba S."/>
            <person name="Fukui S."/>
            <person name="Lee J.C."/>
            <person name="Hiramatsu K."/>
        </authorList>
    </citation>
    <scope>NUCLEOTIDE SEQUENCE [LARGE SCALE GENOMIC DNA]</scope>
    <source>
        <strain>JCSC1435</strain>
    </source>
</reference>
<accession>Q4L3D6</accession>
<gene>
    <name evidence="1" type="primary">recR</name>
    <name type="ordered locus">SH2532</name>
</gene>
<protein>
    <recommendedName>
        <fullName evidence="1">Recombination protein RecR</fullName>
    </recommendedName>
</protein>
<dbReference type="EMBL" id="AP006716">
    <property type="protein sequence ID" value="BAE05841.1"/>
    <property type="molecule type" value="Genomic_DNA"/>
</dbReference>
<dbReference type="RefSeq" id="WP_011276782.1">
    <property type="nucleotide sequence ID" value="NC_007168.1"/>
</dbReference>
<dbReference type="SMR" id="Q4L3D6"/>
<dbReference type="GeneID" id="93781764"/>
<dbReference type="KEGG" id="sha:SH2532"/>
<dbReference type="eggNOG" id="COG0353">
    <property type="taxonomic scope" value="Bacteria"/>
</dbReference>
<dbReference type="HOGENOM" id="CLU_060739_1_0_9"/>
<dbReference type="OrthoDB" id="9802672at2"/>
<dbReference type="Proteomes" id="UP000000543">
    <property type="component" value="Chromosome"/>
</dbReference>
<dbReference type="GO" id="GO:0003677">
    <property type="term" value="F:DNA binding"/>
    <property type="evidence" value="ECO:0007669"/>
    <property type="project" value="UniProtKB-UniRule"/>
</dbReference>
<dbReference type="GO" id="GO:0008270">
    <property type="term" value="F:zinc ion binding"/>
    <property type="evidence" value="ECO:0007669"/>
    <property type="project" value="UniProtKB-KW"/>
</dbReference>
<dbReference type="GO" id="GO:0006310">
    <property type="term" value="P:DNA recombination"/>
    <property type="evidence" value="ECO:0007669"/>
    <property type="project" value="UniProtKB-UniRule"/>
</dbReference>
<dbReference type="GO" id="GO:0006281">
    <property type="term" value="P:DNA repair"/>
    <property type="evidence" value="ECO:0007669"/>
    <property type="project" value="UniProtKB-UniRule"/>
</dbReference>
<dbReference type="CDD" id="cd01025">
    <property type="entry name" value="TOPRIM_recR"/>
    <property type="match status" value="1"/>
</dbReference>
<dbReference type="Gene3D" id="3.30.60.80">
    <property type="match status" value="1"/>
</dbReference>
<dbReference type="Gene3D" id="3.40.1360.10">
    <property type="match status" value="1"/>
</dbReference>
<dbReference type="Gene3D" id="6.10.250.240">
    <property type="match status" value="1"/>
</dbReference>
<dbReference type="Gene3D" id="1.10.8.420">
    <property type="entry name" value="RecR Domain 1"/>
    <property type="match status" value="1"/>
</dbReference>
<dbReference type="HAMAP" id="MF_00017">
    <property type="entry name" value="RecR"/>
    <property type="match status" value="1"/>
</dbReference>
<dbReference type="InterPro" id="IPR000093">
    <property type="entry name" value="DNA_Rcmb_RecR"/>
</dbReference>
<dbReference type="InterPro" id="IPR003583">
    <property type="entry name" value="Hlx-hairpin-Hlx_DNA-bd_motif"/>
</dbReference>
<dbReference type="InterPro" id="IPR023627">
    <property type="entry name" value="Rcmb_RecR"/>
</dbReference>
<dbReference type="InterPro" id="IPR015967">
    <property type="entry name" value="Rcmb_RecR_Znf"/>
</dbReference>
<dbReference type="InterPro" id="IPR006171">
    <property type="entry name" value="TOPRIM_dom"/>
</dbReference>
<dbReference type="InterPro" id="IPR034137">
    <property type="entry name" value="TOPRIM_RecR"/>
</dbReference>
<dbReference type="NCBIfam" id="TIGR00615">
    <property type="entry name" value="recR"/>
    <property type="match status" value="1"/>
</dbReference>
<dbReference type="PANTHER" id="PTHR30446">
    <property type="entry name" value="RECOMBINATION PROTEIN RECR"/>
    <property type="match status" value="1"/>
</dbReference>
<dbReference type="PANTHER" id="PTHR30446:SF0">
    <property type="entry name" value="RECOMBINATION PROTEIN RECR"/>
    <property type="match status" value="1"/>
</dbReference>
<dbReference type="Pfam" id="PF21175">
    <property type="entry name" value="RecR_C"/>
    <property type="match status" value="1"/>
</dbReference>
<dbReference type="Pfam" id="PF21176">
    <property type="entry name" value="RecR_HhH"/>
    <property type="match status" value="1"/>
</dbReference>
<dbReference type="Pfam" id="PF02132">
    <property type="entry name" value="RecR_ZnF"/>
    <property type="match status" value="1"/>
</dbReference>
<dbReference type="Pfam" id="PF13662">
    <property type="entry name" value="Toprim_4"/>
    <property type="match status" value="1"/>
</dbReference>
<dbReference type="SMART" id="SM00278">
    <property type="entry name" value="HhH1"/>
    <property type="match status" value="1"/>
</dbReference>
<dbReference type="SMART" id="SM00493">
    <property type="entry name" value="TOPRIM"/>
    <property type="match status" value="1"/>
</dbReference>
<dbReference type="SUPFAM" id="SSF111304">
    <property type="entry name" value="Recombination protein RecR"/>
    <property type="match status" value="1"/>
</dbReference>
<dbReference type="PROSITE" id="PS01300">
    <property type="entry name" value="RECR"/>
    <property type="match status" value="1"/>
</dbReference>
<dbReference type="PROSITE" id="PS50880">
    <property type="entry name" value="TOPRIM"/>
    <property type="match status" value="1"/>
</dbReference>
<proteinExistence type="inferred from homology"/>
<feature type="chain" id="PRO_1000001622" description="Recombination protein RecR">
    <location>
        <begin position="1"/>
        <end position="198"/>
    </location>
</feature>
<feature type="domain" description="Toprim" evidence="1">
    <location>
        <begin position="80"/>
        <end position="175"/>
    </location>
</feature>
<feature type="zinc finger region" description="C4-type" evidence="1">
    <location>
        <begin position="57"/>
        <end position="72"/>
    </location>
</feature>
<name>RECR_STAHJ</name>
<evidence type="ECO:0000255" key="1">
    <source>
        <dbReference type="HAMAP-Rule" id="MF_00017"/>
    </source>
</evidence>